<name>CITD_ECOUT</name>
<proteinExistence type="inferred from homology"/>
<evidence type="ECO:0000255" key="1">
    <source>
        <dbReference type="HAMAP-Rule" id="MF_00805"/>
    </source>
</evidence>
<feature type="chain" id="PRO_1000047067" description="Citrate lyase acyl carrier protein">
    <location>
        <begin position="1"/>
        <end position="98"/>
    </location>
</feature>
<feature type="modified residue" description="O-(phosphoribosyl dephospho-coenzyme A)serine" evidence="1">
    <location>
        <position position="14"/>
    </location>
</feature>
<organism>
    <name type="scientific">Escherichia coli (strain UTI89 / UPEC)</name>
    <dbReference type="NCBI Taxonomy" id="364106"/>
    <lineage>
        <taxon>Bacteria</taxon>
        <taxon>Pseudomonadati</taxon>
        <taxon>Pseudomonadota</taxon>
        <taxon>Gammaproteobacteria</taxon>
        <taxon>Enterobacterales</taxon>
        <taxon>Enterobacteriaceae</taxon>
        <taxon>Escherichia</taxon>
    </lineage>
</organism>
<comment type="function">
    <text evidence="1">Covalent carrier of the coenzyme of citrate lyase.</text>
</comment>
<comment type="subunit">
    <text evidence="1">Oligomer with a subunit composition of (alpha,beta,gamma)6.</text>
</comment>
<comment type="subcellular location">
    <subcellularLocation>
        <location evidence="1">Cytoplasm</location>
    </subcellularLocation>
</comment>
<comment type="similarity">
    <text evidence="1">Belongs to the CitD family.</text>
</comment>
<sequence length="98" mass="10689">MKINQPAVAGTLESGDVMIRIAPLDTQDIDLQINSSVEKQFGDAIRTTILDVLARYNVRGVQLNVDDKGALDCILRARLEALLARASGIPALPWEDCQ</sequence>
<dbReference type="EMBL" id="CP000243">
    <property type="protein sequence ID" value="ABE06121.1"/>
    <property type="molecule type" value="Genomic_DNA"/>
</dbReference>
<dbReference type="RefSeq" id="WP_000700703.1">
    <property type="nucleotide sequence ID" value="NZ_CP064825.1"/>
</dbReference>
<dbReference type="SMR" id="Q1REU3"/>
<dbReference type="GeneID" id="93776868"/>
<dbReference type="KEGG" id="eci:UTI89_C0621"/>
<dbReference type="HOGENOM" id="CLU_158489_0_0_6"/>
<dbReference type="Proteomes" id="UP000001952">
    <property type="component" value="Chromosome"/>
</dbReference>
<dbReference type="GO" id="GO:0005737">
    <property type="term" value="C:cytoplasm"/>
    <property type="evidence" value="ECO:0007669"/>
    <property type="project" value="UniProtKB-SubCell"/>
</dbReference>
<dbReference type="HAMAP" id="MF_00805">
    <property type="entry name" value="CitD"/>
    <property type="match status" value="1"/>
</dbReference>
<dbReference type="InterPro" id="IPR006495">
    <property type="entry name" value="CitD"/>
</dbReference>
<dbReference type="InterPro" id="IPR023439">
    <property type="entry name" value="Mal_deCO2ase/Cit_lyase_ACP"/>
</dbReference>
<dbReference type="NCBIfam" id="TIGR01608">
    <property type="entry name" value="citD"/>
    <property type="match status" value="1"/>
</dbReference>
<dbReference type="NCBIfam" id="NF009726">
    <property type="entry name" value="PRK13253.1"/>
    <property type="match status" value="1"/>
</dbReference>
<dbReference type="Pfam" id="PF06857">
    <property type="entry name" value="ACP"/>
    <property type="match status" value="1"/>
</dbReference>
<dbReference type="PIRSF" id="PIRSF002736">
    <property type="entry name" value="Citrt_lyas_gamma"/>
    <property type="match status" value="1"/>
</dbReference>
<gene>
    <name evidence="1" type="primary">citD</name>
    <name type="ordered locus">UTI89_C0621</name>
</gene>
<reference key="1">
    <citation type="journal article" date="2006" name="Proc. Natl. Acad. Sci. U.S.A.">
        <title>Identification of genes subject to positive selection in uropathogenic strains of Escherichia coli: a comparative genomics approach.</title>
        <authorList>
            <person name="Chen S.L."/>
            <person name="Hung C.-S."/>
            <person name="Xu J."/>
            <person name="Reigstad C.S."/>
            <person name="Magrini V."/>
            <person name="Sabo A."/>
            <person name="Blasiar D."/>
            <person name="Bieri T."/>
            <person name="Meyer R.R."/>
            <person name="Ozersky P."/>
            <person name="Armstrong J.R."/>
            <person name="Fulton R.S."/>
            <person name="Latreille J.P."/>
            <person name="Spieth J."/>
            <person name="Hooton T.M."/>
            <person name="Mardis E.R."/>
            <person name="Hultgren S.J."/>
            <person name="Gordon J.I."/>
        </authorList>
    </citation>
    <scope>NUCLEOTIDE SEQUENCE [LARGE SCALE GENOMIC DNA]</scope>
    <source>
        <strain>UTI89 / UPEC</strain>
    </source>
</reference>
<accession>Q1REU3</accession>
<protein>
    <recommendedName>
        <fullName evidence="1">Citrate lyase acyl carrier protein</fullName>
    </recommendedName>
    <alternativeName>
        <fullName evidence="1">Citrate lyase gamma chain</fullName>
    </alternativeName>
</protein>
<keyword id="KW-0963">Cytoplasm</keyword>
<keyword id="KW-0597">Phosphoprotein</keyword>